<reference key="1">
    <citation type="journal article" date="1992" name="J. Bacteriol.">
        <title>Identification of the gene encoding transcription factor NusG of Thermus thermophilus.</title>
        <authorList>
            <person name="Heinrich T."/>
            <person name="Schroeder W."/>
            <person name="Erdmann V.A."/>
            <person name="Hartmann R.K."/>
        </authorList>
    </citation>
    <scope>NUCLEOTIDE SEQUENCE [GENOMIC DNA]</scope>
    <source>
        <strain>ATCC 27634 / DSM 579 / HB8</strain>
    </source>
</reference>
<reference key="2">
    <citation type="submission" date="2004-11" db="EMBL/GenBank/DDBJ databases">
        <title>Complete genome sequence of Thermus thermophilus HB8.</title>
        <authorList>
            <person name="Masui R."/>
            <person name="Kurokawa K."/>
            <person name="Nakagawa N."/>
            <person name="Tokunaga F."/>
            <person name="Koyama Y."/>
            <person name="Shibata T."/>
            <person name="Oshima T."/>
            <person name="Yokoyama S."/>
            <person name="Yasunaga T."/>
            <person name="Kuramitsu S."/>
        </authorList>
    </citation>
    <scope>NUCLEOTIDE SEQUENCE [LARGE SCALE GENOMIC DNA]</scope>
    <source>
        <strain>ATCC 27634 / DSM 579 / HB8</strain>
    </source>
</reference>
<reference key="3">
    <citation type="journal article" date="2008" name="Nature">
        <title>Conformational transition of Sec machinery inferred from bacterial SecYE structures.</title>
        <authorList>
            <person name="Tsukazaki T."/>
            <person name="Mori H."/>
            <person name="Fukai S."/>
            <person name="Ishitani R."/>
            <person name="Mori T."/>
            <person name="Dohmae N."/>
            <person name="Perederina A."/>
            <person name="Sugita Y."/>
            <person name="Vassylyev D.G."/>
            <person name="Ito K."/>
            <person name="Nureki O."/>
        </authorList>
    </citation>
    <scope>X-RAY CRYSTALLOGRAPHY (3.2 ANGSTROMS) OF 3-434 OF THE SECYE COMPLEX WITH A PARTIALLY OPEN LATERAL GATE</scope>
    <scope>SUBUNIT</scope>
    <scope>SUBCELLULAR LOCATION</scope>
</reference>
<name>SECE_THET8</name>
<sequence length="60" mass="7065">MFARLIRYFQEARAELARVTWPTREQVVEGTQAILLFTLAFMVILGLYDTVFRFLIGLLR</sequence>
<protein>
    <recommendedName>
        <fullName evidence="1">Protein translocase subunit SecE</fullName>
    </recommendedName>
</protein>
<evidence type="ECO:0000255" key="1">
    <source>
        <dbReference type="HAMAP-Rule" id="MF_00422"/>
    </source>
</evidence>
<evidence type="ECO:0000269" key="2">
    <source>
    </source>
</evidence>
<evidence type="ECO:0000305" key="3"/>
<evidence type="ECO:0007829" key="4">
    <source>
        <dbReference type="PDB" id="5AWW"/>
    </source>
</evidence>
<proteinExistence type="evidence at protein level"/>
<accession>P38383</accession>
<accession>Q5SLP4</accession>
<gene>
    <name evidence="1" type="primary">secE</name>
    <name type="ordered locus">TTHA0249</name>
</gene>
<feature type="chain" id="PRO_0000104189" description="Protein translocase subunit SecE">
    <location>
        <begin position="1"/>
        <end position="60"/>
    </location>
</feature>
<feature type="topological domain" description="Cytoplasmic">
    <location>
        <begin position="1"/>
        <end position="31"/>
    </location>
</feature>
<feature type="transmembrane region" description="Helical">
    <location>
        <begin position="32"/>
        <end position="52"/>
    </location>
</feature>
<feature type="topological domain" description="Extracellular">
    <location>
        <begin position="53"/>
        <end position="60"/>
    </location>
</feature>
<feature type="sequence conflict" description="In Ref. 1; L10348." evidence="3" ref="1">
    <original>I</original>
    <variation>Y</variation>
    <location>
        <position position="44"/>
    </location>
</feature>
<feature type="helix" evidence="4">
    <location>
        <begin position="2"/>
        <end position="17"/>
    </location>
</feature>
<feature type="helix" evidence="4">
    <location>
        <begin position="24"/>
        <end position="59"/>
    </location>
</feature>
<dbReference type="EMBL" id="L10348">
    <property type="status" value="NOT_ANNOTATED_CDS"/>
    <property type="molecule type" value="Genomic_DNA"/>
</dbReference>
<dbReference type="EMBL" id="AP008226">
    <property type="protein sequence ID" value="BAD70072.1"/>
    <property type="molecule type" value="Genomic_DNA"/>
</dbReference>
<dbReference type="RefSeq" id="WP_008630510.1">
    <property type="nucleotide sequence ID" value="NC_006461.1"/>
</dbReference>
<dbReference type="RefSeq" id="YP_143515.1">
    <property type="nucleotide sequence ID" value="NC_006461.1"/>
</dbReference>
<dbReference type="PDB" id="2ZJS">
    <property type="method" value="X-ray"/>
    <property type="resolution" value="3.20 A"/>
    <property type="chains" value="E=1-60"/>
</dbReference>
<dbReference type="PDB" id="2ZQP">
    <property type="method" value="X-ray"/>
    <property type="resolution" value="6.00 A"/>
    <property type="chains" value="E=1-60"/>
</dbReference>
<dbReference type="PDB" id="5AWW">
    <property type="method" value="X-ray"/>
    <property type="resolution" value="2.72 A"/>
    <property type="chains" value="E=1-60"/>
</dbReference>
<dbReference type="PDB" id="5CH4">
    <property type="method" value="X-ray"/>
    <property type="resolution" value="3.64 A"/>
    <property type="chains" value="E=1-60"/>
</dbReference>
<dbReference type="PDBsum" id="2ZJS"/>
<dbReference type="PDBsum" id="2ZQP"/>
<dbReference type="PDBsum" id="5AWW"/>
<dbReference type="PDBsum" id="5CH4"/>
<dbReference type="SMR" id="P38383"/>
<dbReference type="EnsemblBacteria" id="BAD70072">
    <property type="protein sequence ID" value="BAD70072"/>
    <property type="gene ID" value="BAD70072"/>
</dbReference>
<dbReference type="GeneID" id="3168489"/>
<dbReference type="KEGG" id="ttj:TTHA0249"/>
<dbReference type="eggNOG" id="COG0690">
    <property type="taxonomic scope" value="Bacteria"/>
</dbReference>
<dbReference type="HOGENOM" id="CLU_113663_8_0_0"/>
<dbReference type="EvolutionaryTrace" id="P38383"/>
<dbReference type="Proteomes" id="UP000000532">
    <property type="component" value="Chromosome"/>
</dbReference>
<dbReference type="GO" id="GO:0005886">
    <property type="term" value="C:plasma membrane"/>
    <property type="evidence" value="ECO:0007669"/>
    <property type="project" value="UniProtKB-SubCell"/>
</dbReference>
<dbReference type="GO" id="GO:0008320">
    <property type="term" value="F:protein transmembrane transporter activity"/>
    <property type="evidence" value="ECO:0007669"/>
    <property type="project" value="UniProtKB-UniRule"/>
</dbReference>
<dbReference type="GO" id="GO:0065002">
    <property type="term" value="P:intracellular protein transmembrane transport"/>
    <property type="evidence" value="ECO:0007669"/>
    <property type="project" value="UniProtKB-UniRule"/>
</dbReference>
<dbReference type="GO" id="GO:0009306">
    <property type="term" value="P:protein secretion"/>
    <property type="evidence" value="ECO:0007669"/>
    <property type="project" value="UniProtKB-UniRule"/>
</dbReference>
<dbReference type="GO" id="GO:0006605">
    <property type="term" value="P:protein targeting"/>
    <property type="evidence" value="ECO:0007669"/>
    <property type="project" value="UniProtKB-UniRule"/>
</dbReference>
<dbReference type="GO" id="GO:0043952">
    <property type="term" value="P:protein transport by the Sec complex"/>
    <property type="evidence" value="ECO:0007669"/>
    <property type="project" value="UniProtKB-UniRule"/>
</dbReference>
<dbReference type="Gene3D" id="1.20.5.1030">
    <property type="entry name" value="Preprotein translocase secy subunit"/>
    <property type="match status" value="1"/>
</dbReference>
<dbReference type="HAMAP" id="MF_00422">
    <property type="entry name" value="SecE"/>
    <property type="match status" value="1"/>
</dbReference>
<dbReference type="InterPro" id="IPR005807">
    <property type="entry name" value="SecE_bac"/>
</dbReference>
<dbReference type="InterPro" id="IPR038379">
    <property type="entry name" value="SecE_sf"/>
</dbReference>
<dbReference type="InterPro" id="IPR001901">
    <property type="entry name" value="Translocase_SecE/Sec61-g"/>
</dbReference>
<dbReference type="NCBIfam" id="TIGR00964">
    <property type="entry name" value="secE_bact"/>
    <property type="match status" value="1"/>
</dbReference>
<dbReference type="PANTHER" id="PTHR33910">
    <property type="entry name" value="PROTEIN TRANSLOCASE SUBUNIT SECE"/>
    <property type="match status" value="1"/>
</dbReference>
<dbReference type="PANTHER" id="PTHR33910:SF1">
    <property type="entry name" value="PROTEIN TRANSLOCASE SUBUNIT SECE"/>
    <property type="match status" value="1"/>
</dbReference>
<dbReference type="Pfam" id="PF00584">
    <property type="entry name" value="SecE"/>
    <property type="match status" value="1"/>
</dbReference>
<dbReference type="PROSITE" id="PS01067">
    <property type="entry name" value="SECE_SEC61G"/>
    <property type="match status" value="1"/>
</dbReference>
<organism>
    <name type="scientific">Thermus thermophilus (strain ATCC 27634 / DSM 579 / HB8)</name>
    <dbReference type="NCBI Taxonomy" id="300852"/>
    <lineage>
        <taxon>Bacteria</taxon>
        <taxon>Thermotogati</taxon>
        <taxon>Deinococcota</taxon>
        <taxon>Deinococci</taxon>
        <taxon>Thermales</taxon>
        <taxon>Thermaceae</taxon>
        <taxon>Thermus</taxon>
    </lineage>
</organism>
<keyword id="KW-0002">3D-structure</keyword>
<keyword id="KW-0997">Cell inner membrane</keyword>
<keyword id="KW-1003">Cell membrane</keyword>
<keyword id="KW-0472">Membrane</keyword>
<keyword id="KW-0653">Protein transport</keyword>
<keyword id="KW-1185">Reference proteome</keyword>
<keyword id="KW-0811">Translocation</keyword>
<keyword id="KW-0812">Transmembrane</keyword>
<keyword id="KW-1133">Transmembrane helix</keyword>
<keyword id="KW-0813">Transport</keyword>
<comment type="function">
    <text>Essential subunit of the protein translocation channel SecYEG. Clamps together the 2 halves of SecY. May contact the channel plug during translocation.</text>
</comment>
<comment type="subunit">
    <text evidence="2">Component of the Sec protein translocase complex. Heterotrimer consisting of SecY, SecE and SecG subunits. The heterotrimers can form oligomers, although 1 heterotrimer is thought to be able to translocate proteins. Interacts with SecDF, and other proteins may be involved. The channel interacts with SecA via subunit SecY.</text>
</comment>
<comment type="subcellular location">
    <subcellularLocation>
        <location evidence="1 2">Cell inner membrane</location>
        <topology evidence="1 2">Single-pass membrane protein</topology>
    </subcellularLocation>
</comment>
<comment type="similarity">
    <text evidence="1">Belongs to the SecE/SEC61-gamma family.</text>
</comment>
<comment type="sequence caution" evidence="3">
    <conflict type="frameshift">
        <sequence resource="EMBL" id="L10348"/>
    </conflict>
</comment>